<reference key="1">
    <citation type="journal article" date="2006" name="PLoS Genet.">
        <title>Comparative genomics of emerging human ehrlichiosis agents.</title>
        <authorList>
            <person name="Dunning Hotopp J.C."/>
            <person name="Lin M."/>
            <person name="Madupu R."/>
            <person name="Crabtree J."/>
            <person name="Angiuoli S.V."/>
            <person name="Eisen J.A."/>
            <person name="Seshadri R."/>
            <person name="Ren Q."/>
            <person name="Wu M."/>
            <person name="Utterback T.R."/>
            <person name="Smith S."/>
            <person name="Lewis M."/>
            <person name="Khouri H."/>
            <person name="Zhang C."/>
            <person name="Niu H."/>
            <person name="Lin Q."/>
            <person name="Ohashi N."/>
            <person name="Zhi N."/>
            <person name="Nelson W.C."/>
            <person name="Brinkac L.M."/>
            <person name="Dodson R.J."/>
            <person name="Rosovitz M.J."/>
            <person name="Sundaram J.P."/>
            <person name="Daugherty S.C."/>
            <person name="Davidsen T."/>
            <person name="Durkin A.S."/>
            <person name="Gwinn M.L."/>
            <person name="Haft D.H."/>
            <person name="Selengut J.D."/>
            <person name="Sullivan S.A."/>
            <person name="Zafar N."/>
            <person name="Zhou L."/>
            <person name="Benahmed F."/>
            <person name="Forberger H."/>
            <person name="Halpin R."/>
            <person name="Mulligan S."/>
            <person name="Robinson J."/>
            <person name="White O."/>
            <person name="Rikihisa Y."/>
            <person name="Tettelin H."/>
        </authorList>
    </citation>
    <scope>NUCLEOTIDE SEQUENCE [LARGE SCALE GENOMIC DNA]</scope>
    <source>
        <strain>ATCC VR-367 / Miyayama</strain>
    </source>
</reference>
<gene>
    <name evidence="1" type="primary">nuoH</name>
    <name type="ordered locus">NSE_0054</name>
</gene>
<evidence type="ECO:0000255" key="1">
    <source>
        <dbReference type="HAMAP-Rule" id="MF_01350"/>
    </source>
</evidence>
<sequence length="336" mass="37257">MLYLVLSKLVWIVLLAIVLILCVAYLTYAERKVIAATQLRVGPDLVGPFGLLQPIADAIKVLLKEIIIPNAASPKLFLFAPVIIFVLALVGWAVIPFGTSEIDGVEVPTVIANVNLGVMYLLGVAALEVYGTIIAGWASKSSYSFLGALRSASQMISYEIVIAPVVMTVILLTGSLNLAEIVVIKHSLPYWVDILMLPMTFIFFVSILAETNRHPFDLPEAEAELVSGYNVEYSSIPFALFFLGEYANMILSSSIMATLFLGGWYPPINWWGLSIVPGFIWFILKIVFVLFCFLIVRATLPRYRYDQLMRLCWKVFLPVTLLWIVVIGGLVAFNIV</sequence>
<name>NUOH_NEOSM</name>
<feature type="chain" id="PRO_0000240089" description="NADH-quinone oxidoreductase subunit H">
    <location>
        <begin position="1"/>
        <end position="336"/>
    </location>
</feature>
<feature type="transmembrane region" description="Helical" evidence="1">
    <location>
        <begin position="9"/>
        <end position="29"/>
    </location>
</feature>
<feature type="transmembrane region" description="Helical" evidence="1">
    <location>
        <begin position="77"/>
        <end position="97"/>
    </location>
</feature>
<feature type="transmembrane region" description="Helical" evidence="1">
    <location>
        <begin position="116"/>
        <end position="136"/>
    </location>
</feature>
<feature type="transmembrane region" description="Helical" evidence="1">
    <location>
        <begin position="156"/>
        <end position="176"/>
    </location>
</feature>
<feature type="transmembrane region" description="Helical" evidence="1">
    <location>
        <begin position="188"/>
        <end position="208"/>
    </location>
</feature>
<feature type="transmembrane region" description="Helical" evidence="1">
    <location>
        <begin position="236"/>
        <end position="256"/>
    </location>
</feature>
<feature type="transmembrane region" description="Helical" evidence="1">
    <location>
        <begin position="275"/>
        <end position="295"/>
    </location>
</feature>
<feature type="transmembrane region" description="Helical" evidence="1">
    <location>
        <begin position="315"/>
        <end position="335"/>
    </location>
</feature>
<proteinExistence type="inferred from homology"/>
<comment type="function">
    <text evidence="1">NDH-1 shuttles electrons from NADH, via FMN and iron-sulfur (Fe-S) centers, to quinones in the respiratory chain. The immediate electron acceptor for the enzyme in this species is believed to be ubiquinone. Couples the redox reaction to proton translocation (for every two electrons transferred, four hydrogen ions are translocated across the cytoplasmic membrane), and thus conserves the redox energy in a proton gradient. This subunit may bind ubiquinone.</text>
</comment>
<comment type="catalytic activity">
    <reaction evidence="1">
        <text>a quinone + NADH + 5 H(+)(in) = a quinol + NAD(+) + 4 H(+)(out)</text>
        <dbReference type="Rhea" id="RHEA:57888"/>
        <dbReference type="ChEBI" id="CHEBI:15378"/>
        <dbReference type="ChEBI" id="CHEBI:24646"/>
        <dbReference type="ChEBI" id="CHEBI:57540"/>
        <dbReference type="ChEBI" id="CHEBI:57945"/>
        <dbReference type="ChEBI" id="CHEBI:132124"/>
    </reaction>
</comment>
<comment type="subunit">
    <text evidence="1">NDH-1 is composed of 14 different subunits. Subunits NuoA, H, J, K, L, M, N constitute the membrane sector of the complex.</text>
</comment>
<comment type="subcellular location">
    <subcellularLocation>
        <location evidence="1">Cell inner membrane</location>
        <topology evidence="1">Multi-pass membrane protein</topology>
    </subcellularLocation>
</comment>
<comment type="similarity">
    <text evidence="1">Belongs to the complex I subunit 1 family.</text>
</comment>
<protein>
    <recommendedName>
        <fullName evidence="1">NADH-quinone oxidoreductase subunit H</fullName>
        <ecNumber evidence="1">7.1.1.-</ecNumber>
    </recommendedName>
    <alternativeName>
        <fullName evidence="1">NADH dehydrogenase I subunit H</fullName>
    </alternativeName>
    <alternativeName>
        <fullName evidence="1">NDH-1 subunit H</fullName>
    </alternativeName>
</protein>
<dbReference type="EC" id="7.1.1.-" evidence="1"/>
<dbReference type="EMBL" id="CP000237">
    <property type="protein sequence ID" value="ABD45951.1"/>
    <property type="molecule type" value="Genomic_DNA"/>
</dbReference>
<dbReference type="RefSeq" id="WP_011451461.1">
    <property type="nucleotide sequence ID" value="NC_007798.1"/>
</dbReference>
<dbReference type="SMR" id="Q2GEZ1"/>
<dbReference type="STRING" id="222891.NSE_0054"/>
<dbReference type="KEGG" id="nse:NSE_0054"/>
<dbReference type="eggNOG" id="COG1005">
    <property type="taxonomic scope" value="Bacteria"/>
</dbReference>
<dbReference type="HOGENOM" id="CLU_015134_0_1_5"/>
<dbReference type="OrthoDB" id="9803734at2"/>
<dbReference type="Proteomes" id="UP000001942">
    <property type="component" value="Chromosome"/>
</dbReference>
<dbReference type="GO" id="GO:0005886">
    <property type="term" value="C:plasma membrane"/>
    <property type="evidence" value="ECO:0007669"/>
    <property type="project" value="UniProtKB-SubCell"/>
</dbReference>
<dbReference type="GO" id="GO:0003954">
    <property type="term" value="F:NADH dehydrogenase activity"/>
    <property type="evidence" value="ECO:0007669"/>
    <property type="project" value="TreeGrafter"/>
</dbReference>
<dbReference type="GO" id="GO:0016655">
    <property type="term" value="F:oxidoreductase activity, acting on NAD(P)H, quinone or similar compound as acceptor"/>
    <property type="evidence" value="ECO:0007669"/>
    <property type="project" value="UniProtKB-UniRule"/>
</dbReference>
<dbReference type="GO" id="GO:0048038">
    <property type="term" value="F:quinone binding"/>
    <property type="evidence" value="ECO:0007669"/>
    <property type="project" value="UniProtKB-KW"/>
</dbReference>
<dbReference type="GO" id="GO:0009060">
    <property type="term" value="P:aerobic respiration"/>
    <property type="evidence" value="ECO:0007669"/>
    <property type="project" value="TreeGrafter"/>
</dbReference>
<dbReference type="HAMAP" id="MF_01350">
    <property type="entry name" value="NDH1_NuoH"/>
    <property type="match status" value="1"/>
</dbReference>
<dbReference type="InterPro" id="IPR001694">
    <property type="entry name" value="NADH_UbQ_OxRdtase_su1/FPO"/>
</dbReference>
<dbReference type="InterPro" id="IPR018086">
    <property type="entry name" value="NADH_UbQ_OxRdtase_su1_CS"/>
</dbReference>
<dbReference type="NCBIfam" id="NF004741">
    <property type="entry name" value="PRK06076.1-2"/>
    <property type="match status" value="1"/>
</dbReference>
<dbReference type="NCBIfam" id="NF004745">
    <property type="entry name" value="PRK06076.1-6"/>
    <property type="match status" value="1"/>
</dbReference>
<dbReference type="PANTHER" id="PTHR11432">
    <property type="entry name" value="NADH DEHYDROGENASE SUBUNIT 1"/>
    <property type="match status" value="1"/>
</dbReference>
<dbReference type="PANTHER" id="PTHR11432:SF3">
    <property type="entry name" value="NADH-UBIQUINONE OXIDOREDUCTASE CHAIN 1"/>
    <property type="match status" value="1"/>
</dbReference>
<dbReference type="Pfam" id="PF00146">
    <property type="entry name" value="NADHdh"/>
    <property type="match status" value="1"/>
</dbReference>
<dbReference type="PROSITE" id="PS00667">
    <property type="entry name" value="COMPLEX1_ND1_1"/>
    <property type="match status" value="1"/>
</dbReference>
<dbReference type="PROSITE" id="PS00668">
    <property type="entry name" value="COMPLEX1_ND1_2"/>
    <property type="match status" value="1"/>
</dbReference>
<organism>
    <name type="scientific">Neorickettsia sennetsu (strain ATCC VR-367 / Miyayama)</name>
    <name type="common">Ehrlichia sennetsu</name>
    <dbReference type="NCBI Taxonomy" id="222891"/>
    <lineage>
        <taxon>Bacteria</taxon>
        <taxon>Pseudomonadati</taxon>
        <taxon>Pseudomonadota</taxon>
        <taxon>Alphaproteobacteria</taxon>
        <taxon>Rickettsiales</taxon>
        <taxon>Anaplasmataceae</taxon>
        <taxon>Neorickettsia</taxon>
    </lineage>
</organism>
<keyword id="KW-0997">Cell inner membrane</keyword>
<keyword id="KW-1003">Cell membrane</keyword>
<keyword id="KW-0472">Membrane</keyword>
<keyword id="KW-0520">NAD</keyword>
<keyword id="KW-0874">Quinone</keyword>
<keyword id="KW-1278">Translocase</keyword>
<keyword id="KW-0812">Transmembrane</keyword>
<keyword id="KW-1133">Transmembrane helix</keyword>
<keyword id="KW-0830">Ubiquinone</keyword>
<accession>Q2GEZ1</accession>